<sequence>MSRKCQITGKKANNAMAVSHSHRRTKKLQEVNLQWKRVWWPEGNRFVRLRLSTKAIKTLEKKGIDAMAREAGINLNKL</sequence>
<dbReference type="EMBL" id="CP000951">
    <property type="protein sequence ID" value="ACA98850.1"/>
    <property type="molecule type" value="Genomic_DNA"/>
</dbReference>
<dbReference type="RefSeq" id="WP_012306474.1">
    <property type="nucleotide sequence ID" value="NZ_JAHHPU010000001.1"/>
</dbReference>
<dbReference type="SMR" id="B1XIH9"/>
<dbReference type="STRING" id="32049.SYNPCC7002_A0846"/>
<dbReference type="KEGG" id="syp:SYNPCC7002_A0846"/>
<dbReference type="eggNOG" id="COG0227">
    <property type="taxonomic scope" value="Bacteria"/>
</dbReference>
<dbReference type="HOGENOM" id="CLU_064548_3_0_3"/>
<dbReference type="Proteomes" id="UP000001688">
    <property type="component" value="Chromosome"/>
</dbReference>
<dbReference type="GO" id="GO:1990904">
    <property type="term" value="C:ribonucleoprotein complex"/>
    <property type="evidence" value="ECO:0007669"/>
    <property type="project" value="UniProtKB-KW"/>
</dbReference>
<dbReference type="GO" id="GO:0005840">
    <property type="term" value="C:ribosome"/>
    <property type="evidence" value="ECO:0007669"/>
    <property type="project" value="UniProtKB-KW"/>
</dbReference>
<dbReference type="GO" id="GO:0003735">
    <property type="term" value="F:structural constituent of ribosome"/>
    <property type="evidence" value="ECO:0007669"/>
    <property type="project" value="InterPro"/>
</dbReference>
<dbReference type="GO" id="GO:0006412">
    <property type="term" value="P:translation"/>
    <property type="evidence" value="ECO:0007669"/>
    <property type="project" value="UniProtKB-UniRule"/>
</dbReference>
<dbReference type="FunFam" id="2.30.170.40:FF:000005">
    <property type="entry name" value="50S ribosomal L28, chloroplastic"/>
    <property type="match status" value="1"/>
</dbReference>
<dbReference type="Gene3D" id="2.30.170.40">
    <property type="entry name" value="Ribosomal protein L28/L24"/>
    <property type="match status" value="1"/>
</dbReference>
<dbReference type="HAMAP" id="MF_00373">
    <property type="entry name" value="Ribosomal_bL28"/>
    <property type="match status" value="1"/>
</dbReference>
<dbReference type="InterPro" id="IPR026569">
    <property type="entry name" value="Ribosomal_bL28"/>
</dbReference>
<dbReference type="InterPro" id="IPR034704">
    <property type="entry name" value="Ribosomal_bL28/bL31-like_sf"/>
</dbReference>
<dbReference type="InterPro" id="IPR001383">
    <property type="entry name" value="Ribosomal_bL28_bact-type"/>
</dbReference>
<dbReference type="InterPro" id="IPR037147">
    <property type="entry name" value="Ribosomal_bL28_sf"/>
</dbReference>
<dbReference type="NCBIfam" id="TIGR00009">
    <property type="entry name" value="L28"/>
    <property type="match status" value="1"/>
</dbReference>
<dbReference type="PANTHER" id="PTHR13528">
    <property type="entry name" value="39S RIBOSOMAL PROTEIN L28, MITOCHONDRIAL"/>
    <property type="match status" value="1"/>
</dbReference>
<dbReference type="PANTHER" id="PTHR13528:SF2">
    <property type="entry name" value="LARGE RIBOSOMAL SUBUNIT PROTEIN BL28M"/>
    <property type="match status" value="1"/>
</dbReference>
<dbReference type="Pfam" id="PF00830">
    <property type="entry name" value="Ribosomal_L28"/>
    <property type="match status" value="1"/>
</dbReference>
<dbReference type="SUPFAM" id="SSF143800">
    <property type="entry name" value="L28p-like"/>
    <property type="match status" value="1"/>
</dbReference>
<feature type="chain" id="PRO_1000121699" description="Large ribosomal subunit protein bL28">
    <location>
        <begin position="1"/>
        <end position="78"/>
    </location>
</feature>
<feature type="region of interest" description="Disordered" evidence="2">
    <location>
        <begin position="1"/>
        <end position="23"/>
    </location>
</feature>
<gene>
    <name evidence="1" type="primary">rpmB</name>
    <name evidence="1" type="synonym">rpl28</name>
    <name type="ordered locus">SYNPCC7002_A0846</name>
</gene>
<accession>B1XIH9</accession>
<protein>
    <recommendedName>
        <fullName evidence="1">Large ribosomal subunit protein bL28</fullName>
    </recommendedName>
    <alternativeName>
        <fullName evidence="3">50S ribosomal protein L28</fullName>
    </alternativeName>
</protein>
<evidence type="ECO:0000255" key="1">
    <source>
        <dbReference type="HAMAP-Rule" id="MF_00373"/>
    </source>
</evidence>
<evidence type="ECO:0000256" key="2">
    <source>
        <dbReference type="SAM" id="MobiDB-lite"/>
    </source>
</evidence>
<evidence type="ECO:0000305" key="3"/>
<name>RL28_PICP2</name>
<comment type="similarity">
    <text evidence="1">Belongs to the bacterial ribosomal protein bL28 family.</text>
</comment>
<keyword id="KW-1185">Reference proteome</keyword>
<keyword id="KW-0687">Ribonucleoprotein</keyword>
<keyword id="KW-0689">Ribosomal protein</keyword>
<organism>
    <name type="scientific">Picosynechococcus sp. (strain ATCC 27264 / PCC 7002 / PR-6)</name>
    <name type="common">Agmenellum quadruplicatum</name>
    <dbReference type="NCBI Taxonomy" id="32049"/>
    <lineage>
        <taxon>Bacteria</taxon>
        <taxon>Bacillati</taxon>
        <taxon>Cyanobacteriota</taxon>
        <taxon>Cyanophyceae</taxon>
        <taxon>Oscillatoriophycideae</taxon>
        <taxon>Chroococcales</taxon>
        <taxon>Geminocystaceae</taxon>
        <taxon>Picosynechococcus</taxon>
    </lineage>
</organism>
<reference key="1">
    <citation type="submission" date="2008-02" db="EMBL/GenBank/DDBJ databases">
        <title>Complete sequence of Synechococcus sp. PCC 7002.</title>
        <authorList>
            <person name="Li T."/>
            <person name="Zhao J."/>
            <person name="Zhao C."/>
            <person name="Liu Z."/>
            <person name="Zhao F."/>
            <person name="Marquardt J."/>
            <person name="Nomura C.T."/>
            <person name="Persson S."/>
            <person name="Detter J.C."/>
            <person name="Richardson P.M."/>
            <person name="Lanz C."/>
            <person name="Schuster S.C."/>
            <person name="Wang J."/>
            <person name="Li S."/>
            <person name="Huang X."/>
            <person name="Cai T."/>
            <person name="Yu Z."/>
            <person name="Luo J."/>
            <person name="Zhao J."/>
            <person name="Bryant D.A."/>
        </authorList>
    </citation>
    <scope>NUCLEOTIDE SEQUENCE [LARGE SCALE GENOMIC DNA]</scope>
    <source>
        <strain>ATCC 27264 / PCC 7002 / PR-6</strain>
    </source>
</reference>
<proteinExistence type="inferred from homology"/>